<accession>Q8P8Z9</accession>
<name>NFUA_XANCP</name>
<protein>
    <recommendedName>
        <fullName evidence="1">Fe/S biogenesis protein NfuA</fullName>
    </recommendedName>
</protein>
<sequence>MIQISDKAQTYFRKLIEREGVPGMGVRLSAVDAGTPRADAKLEFAEPADLSGDEWAIDCDGFTLYVVAASVPWMDGAEIDYVTQSTGNQQLTIKAPKIKGEAPAESASMVERVRWVVENEINPQLASHGGRVAVQEVSAEGVVLLRFGGGCHGCGMADVTLKQGIEKTLMGRLPGVIAVRDATDHATGDAPYIPRDSAA</sequence>
<feature type="chain" id="PRO_0000209491" description="Fe/S biogenesis protein NfuA">
    <location>
        <begin position="1"/>
        <end position="199"/>
    </location>
</feature>
<feature type="binding site" evidence="1">
    <location>
        <position position="151"/>
    </location>
    <ligand>
        <name>[4Fe-4S] cluster</name>
        <dbReference type="ChEBI" id="CHEBI:49883"/>
    </ligand>
</feature>
<feature type="binding site" evidence="1">
    <location>
        <position position="154"/>
    </location>
    <ligand>
        <name>[4Fe-4S] cluster</name>
        <dbReference type="ChEBI" id="CHEBI:49883"/>
    </ligand>
</feature>
<reference key="1">
    <citation type="journal article" date="2002" name="Nature">
        <title>Comparison of the genomes of two Xanthomonas pathogens with differing host specificities.</title>
        <authorList>
            <person name="da Silva A.C.R."/>
            <person name="Ferro J.A."/>
            <person name="Reinach F.C."/>
            <person name="Farah C.S."/>
            <person name="Furlan L.R."/>
            <person name="Quaggio R.B."/>
            <person name="Monteiro-Vitorello C.B."/>
            <person name="Van Sluys M.A."/>
            <person name="Almeida N.F. Jr."/>
            <person name="Alves L.M.C."/>
            <person name="do Amaral A.M."/>
            <person name="Bertolini M.C."/>
            <person name="Camargo L.E.A."/>
            <person name="Camarotte G."/>
            <person name="Cannavan F."/>
            <person name="Cardozo J."/>
            <person name="Chambergo F."/>
            <person name="Ciapina L.P."/>
            <person name="Cicarelli R.M.B."/>
            <person name="Coutinho L.L."/>
            <person name="Cursino-Santos J.R."/>
            <person name="El-Dorry H."/>
            <person name="Faria J.B."/>
            <person name="Ferreira A.J.S."/>
            <person name="Ferreira R.C.C."/>
            <person name="Ferro M.I.T."/>
            <person name="Formighieri E.F."/>
            <person name="Franco M.C."/>
            <person name="Greggio C.C."/>
            <person name="Gruber A."/>
            <person name="Katsuyama A.M."/>
            <person name="Kishi L.T."/>
            <person name="Leite R.P."/>
            <person name="Lemos E.G.M."/>
            <person name="Lemos M.V.F."/>
            <person name="Locali E.C."/>
            <person name="Machado M.A."/>
            <person name="Madeira A.M.B.N."/>
            <person name="Martinez-Rossi N.M."/>
            <person name="Martins E.C."/>
            <person name="Meidanis J."/>
            <person name="Menck C.F.M."/>
            <person name="Miyaki C.Y."/>
            <person name="Moon D.H."/>
            <person name="Moreira L.M."/>
            <person name="Novo M.T.M."/>
            <person name="Okura V.K."/>
            <person name="Oliveira M.C."/>
            <person name="Oliveira V.R."/>
            <person name="Pereira H.A."/>
            <person name="Rossi A."/>
            <person name="Sena J.A.D."/>
            <person name="Silva C."/>
            <person name="de Souza R.F."/>
            <person name="Spinola L.A.F."/>
            <person name="Takita M.A."/>
            <person name="Tamura R.E."/>
            <person name="Teixeira E.C."/>
            <person name="Tezza R.I.D."/>
            <person name="Trindade dos Santos M."/>
            <person name="Truffi D."/>
            <person name="Tsai S.M."/>
            <person name="White F.F."/>
            <person name="Setubal J.C."/>
            <person name="Kitajima J.P."/>
        </authorList>
    </citation>
    <scope>NUCLEOTIDE SEQUENCE [LARGE SCALE GENOMIC DNA]</scope>
    <source>
        <strain>ATCC 33913 / DSM 3586 / NCPPB 528 / LMG 568 / P 25</strain>
    </source>
</reference>
<keyword id="KW-0004">4Fe-4S</keyword>
<keyword id="KW-0408">Iron</keyword>
<keyword id="KW-0411">Iron-sulfur</keyword>
<keyword id="KW-0479">Metal-binding</keyword>
<keyword id="KW-1185">Reference proteome</keyword>
<evidence type="ECO:0000255" key="1">
    <source>
        <dbReference type="HAMAP-Rule" id="MF_01637"/>
    </source>
</evidence>
<organism>
    <name type="scientific">Xanthomonas campestris pv. campestris (strain ATCC 33913 / DSM 3586 / NCPPB 528 / LMG 568 / P 25)</name>
    <dbReference type="NCBI Taxonomy" id="190485"/>
    <lineage>
        <taxon>Bacteria</taxon>
        <taxon>Pseudomonadati</taxon>
        <taxon>Pseudomonadota</taxon>
        <taxon>Gammaproteobacteria</taxon>
        <taxon>Lysobacterales</taxon>
        <taxon>Lysobacteraceae</taxon>
        <taxon>Xanthomonas</taxon>
    </lineage>
</organism>
<gene>
    <name evidence="1" type="primary">nfuA</name>
    <name type="ordered locus">XCC2079</name>
</gene>
<comment type="function">
    <text evidence="1">Involved in iron-sulfur cluster biogenesis. Binds a 4Fe-4S cluster, can transfer this cluster to apoproteins, and thereby intervenes in the maturation of Fe/S proteins. Could also act as a scaffold/chaperone for damaged Fe/S proteins.</text>
</comment>
<comment type="cofactor">
    <cofactor evidence="1">
        <name>[4Fe-4S] cluster</name>
        <dbReference type="ChEBI" id="CHEBI:49883"/>
    </cofactor>
    <text evidence="1">Binds 1 [4Fe-4S] cluster per subunit. The cluster is presumably bound at the interface of two monomers.</text>
</comment>
<comment type="subunit">
    <text evidence="1">Homodimer.</text>
</comment>
<comment type="similarity">
    <text evidence="1">Belongs to the NfuA family.</text>
</comment>
<proteinExistence type="inferred from homology"/>
<dbReference type="EMBL" id="AE008922">
    <property type="protein sequence ID" value="AAM41368.1"/>
    <property type="molecule type" value="Genomic_DNA"/>
</dbReference>
<dbReference type="RefSeq" id="NP_637444.1">
    <property type="nucleotide sequence ID" value="NC_003902.1"/>
</dbReference>
<dbReference type="RefSeq" id="WP_011037235.1">
    <property type="nucleotide sequence ID" value="NC_003902.1"/>
</dbReference>
<dbReference type="SMR" id="Q8P8Z9"/>
<dbReference type="STRING" id="190485.XCC2079"/>
<dbReference type="EnsemblBacteria" id="AAM41368">
    <property type="protein sequence ID" value="AAM41368"/>
    <property type="gene ID" value="XCC2079"/>
</dbReference>
<dbReference type="KEGG" id="xcc:XCC2079"/>
<dbReference type="PATRIC" id="fig|190485.4.peg.2226"/>
<dbReference type="eggNOG" id="COG0316">
    <property type="taxonomic scope" value="Bacteria"/>
</dbReference>
<dbReference type="eggNOG" id="COG0694">
    <property type="taxonomic scope" value="Bacteria"/>
</dbReference>
<dbReference type="HOGENOM" id="CLU_094569_0_0_6"/>
<dbReference type="OrthoDB" id="9785450at2"/>
<dbReference type="Proteomes" id="UP000001010">
    <property type="component" value="Chromosome"/>
</dbReference>
<dbReference type="GO" id="GO:0051539">
    <property type="term" value="F:4 iron, 4 sulfur cluster binding"/>
    <property type="evidence" value="ECO:0000318"/>
    <property type="project" value="GO_Central"/>
</dbReference>
<dbReference type="GO" id="GO:0005506">
    <property type="term" value="F:iron ion binding"/>
    <property type="evidence" value="ECO:0007669"/>
    <property type="project" value="InterPro"/>
</dbReference>
<dbReference type="GO" id="GO:0016226">
    <property type="term" value="P:iron-sulfur cluster assembly"/>
    <property type="evidence" value="ECO:0007669"/>
    <property type="project" value="UniProtKB-UniRule"/>
</dbReference>
<dbReference type="GO" id="GO:0051604">
    <property type="term" value="P:protein maturation"/>
    <property type="evidence" value="ECO:0007669"/>
    <property type="project" value="UniProtKB-UniRule"/>
</dbReference>
<dbReference type="Gene3D" id="3.30.300.130">
    <property type="entry name" value="Fe-S cluster assembly (FSCA)"/>
    <property type="match status" value="1"/>
</dbReference>
<dbReference type="Gene3D" id="2.60.300.12">
    <property type="entry name" value="HesB-like domain"/>
    <property type="match status" value="1"/>
</dbReference>
<dbReference type="HAMAP" id="MF_01637">
    <property type="entry name" value="Fe_S_biogen_NfuA"/>
    <property type="match status" value="1"/>
</dbReference>
<dbReference type="InterPro" id="IPR017726">
    <property type="entry name" value="Fe/S_biogenesis_protein_NfuA"/>
</dbReference>
<dbReference type="InterPro" id="IPR034904">
    <property type="entry name" value="FSCA_dom_sf"/>
</dbReference>
<dbReference type="InterPro" id="IPR035903">
    <property type="entry name" value="HesB-like_dom_sf"/>
</dbReference>
<dbReference type="InterPro" id="IPR001075">
    <property type="entry name" value="NIF_FeS_clus_asmbl_NifU_C"/>
</dbReference>
<dbReference type="PANTHER" id="PTHR11178:SF51">
    <property type="entry name" value="FE_S BIOGENESIS PROTEIN NFUA"/>
    <property type="match status" value="1"/>
</dbReference>
<dbReference type="PANTHER" id="PTHR11178">
    <property type="entry name" value="IRON-SULFUR CLUSTER SCAFFOLD PROTEIN NFU-RELATED"/>
    <property type="match status" value="1"/>
</dbReference>
<dbReference type="Pfam" id="PF01106">
    <property type="entry name" value="NifU"/>
    <property type="match status" value="1"/>
</dbReference>
<dbReference type="SUPFAM" id="SSF117916">
    <property type="entry name" value="Fe-S cluster assembly (FSCA) domain-like"/>
    <property type="match status" value="1"/>
</dbReference>
<dbReference type="SUPFAM" id="SSF89360">
    <property type="entry name" value="HesB-like domain"/>
    <property type="match status" value="1"/>
</dbReference>